<accession>B2G8N1</accession>
<comment type="function">
    <text evidence="1">Modulates RecA activity.</text>
</comment>
<comment type="subcellular location">
    <subcellularLocation>
        <location evidence="1">Cytoplasm</location>
    </subcellularLocation>
</comment>
<comment type="similarity">
    <text evidence="1">Belongs to the RecX family.</text>
</comment>
<feature type="chain" id="PRO_1000137175" description="Regulatory protein RecX">
    <location>
        <begin position="1"/>
        <end position="264"/>
    </location>
</feature>
<proteinExistence type="inferred from homology"/>
<keyword id="KW-0963">Cytoplasm</keyword>
<dbReference type="EMBL" id="AP007281">
    <property type="protein sequence ID" value="BAG25813.1"/>
    <property type="molecule type" value="Genomic_DNA"/>
</dbReference>
<dbReference type="RefSeq" id="WP_003668670.1">
    <property type="nucleotide sequence ID" value="NC_010609.1"/>
</dbReference>
<dbReference type="SMR" id="B2G8N1"/>
<dbReference type="KEGG" id="lrf:LAR_1297"/>
<dbReference type="HOGENOM" id="CLU_066607_4_0_9"/>
<dbReference type="GO" id="GO:0005737">
    <property type="term" value="C:cytoplasm"/>
    <property type="evidence" value="ECO:0007669"/>
    <property type="project" value="UniProtKB-SubCell"/>
</dbReference>
<dbReference type="GO" id="GO:0006282">
    <property type="term" value="P:regulation of DNA repair"/>
    <property type="evidence" value="ECO:0007669"/>
    <property type="project" value="UniProtKB-UniRule"/>
</dbReference>
<dbReference type="Gene3D" id="1.10.10.10">
    <property type="entry name" value="Winged helix-like DNA-binding domain superfamily/Winged helix DNA-binding domain"/>
    <property type="match status" value="4"/>
</dbReference>
<dbReference type="HAMAP" id="MF_01114">
    <property type="entry name" value="RecX"/>
    <property type="match status" value="1"/>
</dbReference>
<dbReference type="InterPro" id="IPR053926">
    <property type="entry name" value="RecX_HTH_1st"/>
</dbReference>
<dbReference type="InterPro" id="IPR053924">
    <property type="entry name" value="RecX_HTH_2nd"/>
</dbReference>
<dbReference type="InterPro" id="IPR053925">
    <property type="entry name" value="RecX_HTH_3rd"/>
</dbReference>
<dbReference type="InterPro" id="IPR003783">
    <property type="entry name" value="Regulatory_RecX"/>
</dbReference>
<dbReference type="InterPro" id="IPR036388">
    <property type="entry name" value="WH-like_DNA-bd_sf"/>
</dbReference>
<dbReference type="NCBIfam" id="NF010733">
    <property type="entry name" value="PRK14135.1"/>
    <property type="match status" value="1"/>
</dbReference>
<dbReference type="PANTHER" id="PTHR33602">
    <property type="entry name" value="REGULATORY PROTEIN RECX FAMILY PROTEIN"/>
    <property type="match status" value="1"/>
</dbReference>
<dbReference type="PANTHER" id="PTHR33602:SF1">
    <property type="entry name" value="REGULATORY PROTEIN RECX FAMILY PROTEIN"/>
    <property type="match status" value="1"/>
</dbReference>
<dbReference type="Pfam" id="PF21982">
    <property type="entry name" value="RecX_HTH1"/>
    <property type="match status" value="1"/>
</dbReference>
<dbReference type="Pfam" id="PF02631">
    <property type="entry name" value="RecX_HTH2"/>
    <property type="match status" value="1"/>
</dbReference>
<dbReference type="Pfam" id="PF21981">
    <property type="entry name" value="RecX_HTH3"/>
    <property type="match status" value="2"/>
</dbReference>
<sequence length="264" mass="30916">MAKISKIEAQKRKGRYNIYLDGKYAFPVAESVLIQFRLMKGTELDEKQIAAIATADQQAKAYSRMLDYLSYQMRTESDIVKKLKEIDTPEEFVESILKKLRGQQLIDDHAYAASYVRTMINTDLKGPGVIRQHLRQKGIGENDIDDALTQFTPEVQAELAKKLAEKLFRRYRNQPERRREQKVQQGLMTKGFSSSVYEMIKDEVVPQPDLEQENDLLAKEAAKQWRRVRCYQGYEREQHFKQAMYRKGFDLDDVQSWLDAQDFQ</sequence>
<evidence type="ECO:0000255" key="1">
    <source>
        <dbReference type="HAMAP-Rule" id="MF_01114"/>
    </source>
</evidence>
<organism>
    <name type="scientific">Limosilactobacillus reuteri subsp. reuteri (strain JCM 1112)</name>
    <name type="common">Lactobacillus reuteri</name>
    <dbReference type="NCBI Taxonomy" id="557433"/>
    <lineage>
        <taxon>Bacteria</taxon>
        <taxon>Bacillati</taxon>
        <taxon>Bacillota</taxon>
        <taxon>Bacilli</taxon>
        <taxon>Lactobacillales</taxon>
        <taxon>Lactobacillaceae</taxon>
        <taxon>Limosilactobacillus</taxon>
    </lineage>
</organism>
<gene>
    <name evidence="1" type="primary">recX</name>
    <name type="ordered locus">LAR_1297</name>
</gene>
<protein>
    <recommendedName>
        <fullName evidence="1">Regulatory protein RecX</fullName>
    </recommendedName>
</protein>
<name>RECX_LIMRJ</name>
<reference key="1">
    <citation type="journal article" date="2008" name="DNA Res.">
        <title>Comparative genome analysis of Lactobacillus reuteri and Lactobacillus fermentum reveal a genomic island for reuterin and cobalamin production.</title>
        <authorList>
            <person name="Morita H."/>
            <person name="Toh H."/>
            <person name="Fukuda S."/>
            <person name="Horikawa H."/>
            <person name="Oshima K."/>
            <person name="Suzuki T."/>
            <person name="Murakami M."/>
            <person name="Hisamatsu S."/>
            <person name="Kato Y."/>
            <person name="Takizawa T."/>
            <person name="Fukuoka H."/>
            <person name="Yoshimura T."/>
            <person name="Itoh K."/>
            <person name="O'Sullivan D.J."/>
            <person name="McKay L.L."/>
            <person name="Ohno H."/>
            <person name="Kikuchi J."/>
            <person name="Masaoka T."/>
            <person name="Hattori M."/>
        </authorList>
    </citation>
    <scope>NUCLEOTIDE SEQUENCE [LARGE SCALE GENOMIC DNA]</scope>
    <source>
        <strain>JCM 1112</strain>
    </source>
</reference>